<proteinExistence type="evidence at protein level"/>
<reference key="1">
    <citation type="journal article" date="1987" name="J. Bacteriol.">
        <title>Nucleotide sequences of the genes for two distinct cephalosporin acylases from a Pseudomonas strain.</title>
        <authorList>
            <person name="Matsuda A."/>
            <person name="Toma K."/>
            <person name="Komatsu K."/>
        </authorList>
    </citation>
    <scope>NUCLEOTIDE SEQUENCE [GENOMIC DNA]</scope>
    <scope>PROTEIN SEQUENCE OF 2-22 AND 368-388</scope>
    <scope>SUBUNIT</scope>
    <source>
        <strain>SE83</strain>
    </source>
</reference>
<feature type="initiator methionine" description="Removed" evidence="2">
    <location>
        <position position="1"/>
    </location>
</feature>
<feature type="chain" id="PRO_0000011080" description="Acylase ACY 1 large subunit">
    <location>
        <begin position="2"/>
        <end position="367" status="uncertain"/>
    </location>
</feature>
<feature type="chain" id="PRO_0000011081" description="Acylase ACY 1 small subunit">
    <location>
        <begin position="368"/>
        <end position="558"/>
    </location>
</feature>
<feature type="active site" description="Nucleophile" evidence="1">
    <location>
        <position position="368"/>
    </location>
</feature>
<comment type="function">
    <text>Besides the cephalosporin acylase I activity which converts GL-7ACA into 7-ACA; this enzyme displays some gamma glutamyltranspeptidase activity.</text>
</comment>
<comment type="catalytic activity">
    <reaction>
        <text>(7R)-7-(4-carboxybutanamido)cephalosporanate + H2O = (7R)-7-aminocephalosporanate + glutarate</text>
        <dbReference type="Rhea" id="RHEA:23508"/>
        <dbReference type="ChEBI" id="CHEBI:15377"/>
        <dbReference type="ChEBI" id="CHEBI:30921"/>
        <dbReference type="ChEBI" id="CHEBI:58501"/>
        <dbReference type="ChEBI" id="CHEBI:58693"/>
        <dbReference type="EC" id="3.5.1.93"/>
    </reaction>
</comment>
<comment type="catalytic activity">
    <reaction>
        <text>an N-terminal (5-L-glutamyl)-[peptide] + an alpha-amino acid = 5-L-glutamyl amino acid + an N-terminal L-alpha-aminoacyl-[peptide]</text>
        <dbReference type="Rhea" id="RHEA:23904"/>
        <dbReference type="Rhea" id="RHEA-COMP:9780"/>
        <dbReference type="Rhea" id="RHEA-COMP:9795"/>
        <dbReference type="ChEBI" id="CHEBI:77644"/>
        <dbReference type="ChEBI" id="CHEBI:78597"/>
        <dbReference type="ChEBI" id="CHEBI:78599"/>
        <dbReference type="ChEBI" id="CHEBI:78608"/>
        <dbReference type="EC" id="2.3.2.2"/>
    </reaction>
</comment>
<comment type="catalytic activity">
    <reaction>
        <text>glutathione + H2O = L-cysteinylglycine + L-glutamate</text>
        <dbReference type="Rhea" id="RHEA:28807"/>
        <dbReference type="ChEBI" id="CHEBI:15377"/>
        <dbReference type="ChEBI" id="CHEBI:29985"/>
        <dbReference type="ChEBI" id="CHEBI:57925"/>
        <dbReference type="ChEBI" id="CHEBI:61694"/>
        <dbReference type="EC" id="3.4.19.13"/>
    </reaction>
</comment>
<comment type="catalytic activity">
    <reaction>
        <text>an S-substituted glutathione + H2O = an S-substituted L-cysteinylglycine + L-glutamate</text>
        <dbReference type="Rhea" id="RHEA:59468"/>
        <dbReference type="ChEBI" id="CHEBI:15377"/>
        <dbReference type="ChEBI" id="CHEBI:29985"/>
        <dbReference type="ChEBI" id="CHEBI:90779"/>
        <dbReference type="ChEBI" id="CHEBI:143103"/>
        <dbReference type="EC" id="3.4.19.13"/>
    </reaction>
</comment>
<comment type="subunit">
    <text evidence="2">Dimer of two non-identical chains processed from the same precursor.</text>
</comment>
<comment type="similarity">
    <text evidence="3">Belongs to the gamma-glutamyltransferase family.</text>
</comment>
<organism>
    <name type="scientific">Pseudomonas sp. (strain SE83)</name>
    <dbReference type="NCBI Taxonomy" id="309"/>
    <lineage>
        <taxon>Bacteria</taxon>
        <taxon>Pseudomonadati</taxon>
        <taxon>Pseudomonadota</taxon>
    </lineage>
</organism>
<accession>P15557</accession>
<sequence length="558" mass="58095">MNAPVPVPRVADFTCEKKPASGSRGMVVTNHPLASAAGAQILLAGGNAIDAAVASLFALTVAEPMMVGILGGGLSHIRLADGRHVVIDNLSTAPGKATAEMYECLSDEIGKQRDTRDRQNVVGAKAVAVPGALKGWCEALARFGTLPLAEVLQPAIGLAERGFVVTPYLSNCITDNAGDLARDPGLAAMLLPGGKPLQPGMRLVQSDYAASLKLIAAEGPDALYGGKLGRALTDYMAANGGLIDQADLANYRIELREPIRGSYRGYEIIGPPPPSSSGVHITQMLNILEGYDIGSLGFGSTDAVHLLAEALKIAFADRAVATADPAFVKVPVARLIDKAYADERRALIEMEQAKSWTAGLSGGESADTTHVTVADAMGNVVSATQTINGLFGACVQIPGTGMIANNYMYNFDPHPGRALSIAPGKRVFTSMAPMMALKEGRIAFALGLPGALRIFPSALQAIVNLIDHRMSLQEAVEAPRVWTEGGVLELEEAIPEAVAQALIARGHKVVRSPRVAGGMNAIAFNPDGTLTGAACWRADGTPVAISGGLARAGARFTI</sequence>
<keyword id="KW-0012">Acyltransferase</keyword>
<keyword id="KW-0046">Antibiotic resistance</keyword>
<keyword id="KW-0903">Direct protein sequencing</keyword>
<keyword id="KW-0378">Hydrolase</keyword>
<keyword id="KW-0808">Transferase</keyword>
<keyword id="KW-0865">Zymogen</keyword>
<name>PAC1_PSES3</name>
<gene>
    <name type="primary">acyI</name>
</gene>
<evidence type="ECO:0000250" key="1"/>
<evidence type="ECO:0000269" key="2">
    <source>
    </source>
</evidence>
<evidence type="ECO:0000305" key="3"/>
<dbReference type="EC" id="3.5.1.93"/>
<dbReference type="EC" id="2.3.2.2"/>
<dbReference type="EC" id="3.4.19.13"/>
<dbReference type="EMBL" id="M18279">
    <property type="protein sequence ID" value="AAA88424.1"/>
    <property type="molecule type" value="Genomic_DNA"/>
</dbReference>
<dbReference type="PIR" id="B28392">
    <property type="entry name" value="B28392"/>
</dbReference>
<dbReference type="SMR" id="P15557"/>
<dbReference type="MEROPS" id="T03.001"/>
<dbReference type="BRENDA" id="3.5.1.93">
    <property type="organism ID" value="5085"/>
</dbReference>
<dbReference type="GO" id="GO:0033968">
    <property type="term" value="F:glutaryl-7-aminocephalosporanic-acid acylase activity"/>
    <property type="evidence" value="ECO:0007669"/>
    <property type="project" value="UniProtKB-EC"/>
</dbReference>
<dbReference type="GO" id="GO:0036374">
    <property type="term" value="F:glutathione hydrolase activity"/>
    <property type="evidence" value="ECO:0007669"/>
    <property type="project" value="UniProtKB-EC"/>
</dbReference>
<dbReference type="GO" id="GO:0103068">
    <property type="term" value="F:leukotriene C4 gamma-glutamyl transferase activity"/>
    <property type="evidence" value="ECO:0007669"/>
    <property type="project" value="UniProtKB-EC"/>
</dbReference>
<dbReference type="GO" id="GO:0006751">
    <property type="term" value="P:glutathione catabolic process"/>
    <property type="evidence" value="ECO:0007669"/>
    <property type="project" value="InterPro"/>
</dbReference>
<dbReference type="GO" id="GO:0046677">
    <property type="term" value="P:response to antibiotic"/>
    <property type="evidence" value="ECO:0007669"/>
    <property type="project" value="UniProtKB-KW"/>
</dbReference>
<dbReference type="Gene3D" id="1.10.246.130">
    <property type="match status" value="1"/>
</dbReference>
<dbReference type="Gene3D" id="3.60.20.40">
    <property type="match status" value="1"/>
</dbReference>
<dbReference type="InterPro" id="IPR051792">
    <property type="entry name" value="GGT_bact"/>
</dbReference>
<dbReference type="InterPro" id="IPR055262">
    <property type="entry name" value="GGT_CS"/>
</dbReference>
<dbReference type="InterPro" id="IPR043138">
    <property type="entry name" value="GGT_lsub_C"/>
</dbReference>
<dbReference type="InterPro" id="IPR000101">
    <property type="entry name" value="GGT_peptidase"/>
</dbReference>
<dbReference type="InterPro" id="IPR043137">
    <property type="entry name" value="GGT_ssub"/>
</dbReference>
<dbReference type="InterPro" id="IPR029055">
    <property type="entry name" value="Ntn_hydrolases_N"/>
</dbReference>
<dbReference type="NCBIfam" id="TIGR00066">
    <property type="entry name" value="g_glut_trans"/>
    <property type="match status" value="1"/>
</dbReference>
<dbReference type="PANTHER" id="PTHR43199">
    <property type="entry name" value="GLUTATHIONE HYDROLASE"/>
    <property type="match status" value="1"/>
</dbReference>
<dbReference type="PANTHER" id="PTHR43199:SF1">
    <property type="entry name" value="GLUTATHIONE HYDROLASE PROENZYME"/>
    <property type="match status" value="1"/>
</dbReference>
<dbReference type="Pfam" id="PF01019">
    <property type="entry name" value="G_glu_transpept"/>
    <property type="match status" value="1"/>
</dbReference>
<dbReference type="PRINTS" id="PR01210">
    <property type="entry name" value="GGTRANSPTASE"/>
</dbReference>
<dbReference type="SUPFAM" id="SSF56235">
    <property type="entry name" value="N-terminal nucleophile aminohydrolases (Ntn hydrolases)"/>
    <property type="match status" value="1"/>
</dbReference>
<dbReference type="PROSITE" id="PS00462">
    <property type="entry name" value="G_GLU_TRANSPEPTIDASE"/>
    <property type="match status" value="1"/>
</dbReference>
<protein>
    <recommendedName>
        <fullName>Acylase ACY 1 proenzyme</fullName>
    </recommendedName>
    <domain>
        <recommendedName>
            <fullName>Cephalosporin acylase</fullName>
            <ecNumber>3.5.1.93</ecNumber>
        </recommendedName>
        <alternativeName>
            <fullName>GL-7ACA acylase</fullName>
        </alternativeName>
    </domain>
    <domain>
        <recommendedName>
            <fullName>Gamma-glutamyltranspeptidase</fullName>
            <shortName>GGT</shortName>
            <ecNumber>2.3.2.2</ecNumber>
        </recommendedName>
        <alternativeName>
            <fullName>Glutathione hydrolase</fullName>
            <ecNumber>3.4.19.13</ecNumber>
        </alternativeName>
    </domain>
    <component>
        <recommendedName>
            <fullName>Acylase ACY 1 large subunit</fullName>
        </recommendedName>
    </component>
    <component>
        <recommendedName>
            <fullName>Acylase ACY 1 small subunit</fullName>
        </recommendedName>
    </component>
</protein>